<comment type="function">
    <text evidence="1">Participates actively in the response to hyperosmotic and heat shock by preventing the aggregation of stress-denatured proteins, in association with DnaK and GrpE. It is the nucleotide exchange factor for DnaK and may function as a thermosensor. Unfolded proteins bind initially to DnaJ; upon interaction with the DnaJ-bound protein, DnaK hydrolyzes its bound ATP, resulting in the formation of a stable complex. GrpE releases ADP from DnaK; ATP binding to DnaK triggers the release of the substrate protein, thus completing the reaction cycle. Several rounds of ATP-dependent interactions between DnaJ, DnaK and GrpE are required for fully efficient folding.</text>
</comment>
<comment type="subunit">
    <text evidence="1">Homodimer.</text>
</comment>
<comment type="subcellular location">
    <subcellularLocation>
        <location evidence="1">Cytoplasm</location>
    </subcellularLocation>
</comment>
<comment type="similarity">
    <text evidence="1">Belongs to the GrpE family.</text>
</comment>
<gene>
    <name evidence="1" type="primary">grpE</name>
    <name type="ordered locus">SPJ_0482</name>
</gene>
<protein>
    <recommendedName>
        <fullName evidence="1">Protein GrpE</fullName>
    </recommendedName>
    <alternativeName>
        <fullName evidence="1">HSP-70 cofactor</fullName>
    </alternativeName>
</protein>
<reference key="1">
    <citation type="journal article" date="2010" name="Genome Biol.">
        <title>Structure and dynamics of the pan-genome of Streptococcus pneumoniae and closely related species.</title>
        <authorList>
            <person name="Donati C."/>
            <person name="Hiller N.L."/>
            <person name="Tettelin H."/>
            <person name="Muzzi A."/>
            <person name="Croucher N.J."/>
            <person name="Angiuoli S.V."/>
            <person name="Oggioni M."/>
            <person name="Dunning Hotopp J.C."/>
            <person name="Hu F.Z."/>
            <person name="Riley D.R."/>
            <person name="Covacci A."/>
            <person name="Mitchell T.J."/>
            <person name="Bentley S.D."/>
            <person name="Kilian M."/>
            <person name="Ehrlich G.D."/>
            <person name="Rappuoli R."/>
            <person name="Moxon E.R."/>
            <person name="Masignani V."/>
        </authorList>
    </citation>
    <scope>NUCLEOTIDE SEQUENCE [LARGE SCALE GENOMIC DNA]</scope>
    <source>
        <strain>JJA</strain>
    </source>
</reference>
<dbReference type="EMBL" id="CP000919">
    <property type="protein sequence ID" value="ACO19110.1"/>
    <property type="molecule type" value="Genomic_DNA"/>
</dbReference>
<dbReference type="RefSeq" id="WP_000046031.1">
    <property type="nucleotide sequence ID" value="NC_012466.1"/>
</dbReference>
<dbReference type="SMR" id="C1CCQ7"/>
<dbReference type="GeneID" id="45654056"/>
<dbReference type="KEGG" id="sjj:SPJ_0482"/>
<dbReference type="HOGENOM" id="CLU_057217_6_3_9"/>
<dbReference type="Proteomes" id="UP000002206">
    <property type="component" value="Chromosome"/>
</dbReference>
<dbReference type="GO" id="GO:0005737">
    <property type="term" value="C:cytoplasm"/>
    <property type="evidence" value="ECO:0007669"/>
    <property type="project" value="UniProtKB-SubCell"/>
</dbReference>
<dbReference type="GO" id="GO:0000774">
    <property type="term" value="F:adenyl-nucleotide exchange factor activity"/>
    <property type="evidence" value="ECO:0007669"/>
    <property type="project" value="InterPro"/>
</dbReference>
<dbReference type="GO" id="GO:0042803">
    <property type="term" value="F:protein homodimerization activity"/>
    <property type="evidence" value="ECO:0007669"/>
    <property type="project" value="InterPro"/>
</dbReference>
<dbReference type="GO" id="GO:0051087">
    <property type="term" value="F:protein-folding chaperone binding"/>
    <property type="evidence" value="ECO:0007669"/>
    <property type="project" value="InterPro"/>
</dbReference>
<dbReference type="GO" id="GO:0051082">
    <property type="term" value="F:unfolded protein binding"/>
    <property type="evidence" value="ECO:0007669"/>
    <property type="project" value="TreeGrafter"/>
</dbReference>
<dbReference type="GO" id="GO:0006457">
    <property type="term" value="P:protein folding"/>
    <property type="evidence" value="ECO:0007669"/>
    <property type="project" value="InterPro"/>
</dbReference>
<dbReference type="CDD" id="cd00446">
    <property type="entry name" value="GrpE"/>
    <property type="match status" value="1"/>
</dbReference>
<dbReference type="FunFam" id="2.30.22.10:FF:000004">
    <property type="entry name" value="Protein GrpE"/>
    <property type="match status" value="1"/>
</dbReference>
<dbReference type="FunFam" id="3.90.20.20:FF:000007">
    <property type="entry name" value="Protein GrpE"/>
    <property type="match status" value="1"/>
</dbReference>
<dbReference type="Gene3D" id="3.90.20.20">
    <property type="match status" value="1"/>
</dbReference>
<dbReference type="Gene3D" id="2.30.22.10">
    <property type="entry name" value="Head domain of nucleotide exchange factor GrpE"/>
    <property type="match status" value="1"/>
</dbReference>
<dbReference type="HAMAP" id="MF_01151">
    <property type="entry name" value="GrpE"/>
    <property type="match status" value="1"/>
</dbReference>
<dbReference type="InterPro" id="IPR000740">
    <property type="entry name" value="GrpE"/>
</dbReference>
<dbReference type="InterPro" id="IPR013805">
    <property type="entry name" value="GrpE_coiled_coil"/>
</dbReference>
<dbReference type="InterPro" id="IPR009012">
    <property type="entry name" value="GrpE_head"/>
</dbReference>
<dbReference type="NCBIfam" id="NF010738">
    <property type="entry name" value="PRK14140.1"/>
    <property type="match status" value="1"/>
</dbReference>
<dbReference type="NCBIfam" id="NF010753">
    <property type="entry name" value="PRK14156.1"/>
    <property type="match status" value="1"/>
</dbReference>
<dbReference type="NCBIfam" id="NF010759">
    <property type="entry name" value="PRK14162.1"/>
    <property type="match status" value="1"/>
</dbReference>
<dbReference type="PANTHER" id="PTHR21237">
    <property type="entry name" value="GRPE PROTEIN"/>
    <property type="match status" value="1"/>
</dbReference>
<dbReference type="PANTHER" id="PTHR21237:SF23">
    <property type="entry name" value="GRPE PROTEIN HOMOLOG, MITOCHONDRIAL"/>
    <property type="match status" value="1"/>
</dbReference>
<dbReference type="Pfam" id="PF01025">
    <property type="entry name" value="GrpE"/>
    <property type="match status" value="1"/>
</dbReference>
<dbReference type="PRINTS" id="PR00773">
    <property type="entry name" value="GRPEPROTEIN"/>
</dbReference>
<dbReference type="SUPFAM" id="SSF58014">
    <property type="entry name" value="Coiled-coil domain of nucleotide exchange factor GrpE"/>
    <property type="match status" value="1"/>
</dbReference>
<dbReference type="SUPFAM" id="SSF51064">
    <property type="entry name" value="Head domain of nucleotide exchange factor GrpE"/>
    <property type="match status" value="1"/>
</dbReference>
<dbReference type="PROSITE" id="PS01071">
    <property type="entry name" value="GRPE"/>
    <property type="match status" value="1"/>
</dbReference>
<accession>C1CCQ7</accession>
<keyword id="KW-0143">Chaperone</keyword>
<keyword id="KW-0963">Cytoplasm</keyword>
<keyword id="KW-0346">Stress response</keyword>
<evidence type="ECO:0000255" key="1">
    <source>
        <dbReference type="HAMAP-Rule" id="MF_01151"/>
    </source>
</evidence>
<evidence type="ECO:0000256" key="2">
    <source>
        <dbReference type="SAM" id="MobiDB-lite"/>
    </source>
</evidence>
<organism>
    <name type="scientific">Streptococcus pneumoniae (strain JJA)</name>
    <dbReference type="NCBI Taxonomy" id="488222"/>
    <lineage>
        <taxon>Bacteria</taxon>
        <taxon>Bacillati</taxon>
        <taxon>Bacillota</taxon>
        <taxon>Bacilli</taxon>
        <taxon>Lactobacillales</taxon>
        <taxon>Streptococcaceae</taxon>
        <taxon>Streptococcus</taxon>
    </lineage>
</organism>
<sequence length="174" mass="19969">MAQDIKNEEVEEVQEEEVVETAEETTPEKSELDLANERADEFENKYLRAHAEMQNIQRRANEERQNLQRYRSQDLAKAILPSLDNLERALAVEGLTDDVKKGLGMVQESLIHALKEEGIEEIAADGEFDHNYHMAIQTLPADDEHPVDTIAQVFQKGYKLHDRILRPAMVVVYN</sequence>
<name>GRPE_STRZJ</name>
<proteinExistence type="inferred from homology"/>
<feature type="chain" id="PRO_1000164220" description="Protein GrpE">
    <location>
        <begin position="1"/>
        <end position="174"/>
    </location>
</feature>
<feature type="region of interest" description="Disordered" evidence="2">
    <location>
        <begin position="1"/>
        <end position="35"/>
    </location>
</feature>
<feature type="compositionally biased region" description="Acidic residues" evidence="2">
    <location>
        <begin position="9"/>
        <end position="25"/>
    </location>
</feature>
<feature type="compositionally biased region" description="Basic and acidic residues" evidence="2">
    <location>
        <begin position="26"/>
        <end position="35"/>
    </location>
</feature>